<evidence type="ECO:0000255" key="1">
    <source>
        <dbReference type="HAMAP-Rule" id="MF_01219"/>
    </source>
</evidence>
<name>PYRR_GLOC7</name>
<gene>
    <name evidence="1" type="primary">pyrR</name>
    <name type="ordered locus">PCC7424_3958</name>
</gene>
<accession>B7KKJ9</accession>
<reference key="1">
    <citation type="journal article" date="2011" name="MBio">
        <title>Novel metabolic attributes of the genus Cyanothece, comprising a group of unicellular nitrogen-fixing Cyanobacteria.</title>
        <authorList>
            <person name="Bandyopadhyay A."/>
            <person name="Elvitigala T."/>
            <person name="Welsh E."/>
            <person name="Stockel J."/>
            <person name="Liberton M."/>
            <person name="Min H."/>
            <person name="Sherman L.A."/>
            <person name="Pakrasi H.B."/>
        </authorList>
    </citation>
    <scope>NUCLEOTIDE SEQUENCE [LARGE SCALE GENOMIC DNA]</scope>
    <source>
        <strain>PCC 7424</strain>
    </source>
</reference>
<feature type="chain" id="PRO_1000139191" description="Bifunctional protein PyrR">
    <location>
        <begin position="1"/>
        <end position="177"/>
    </location>
</feature>
<feature type="short sequence motif" description="PRPP-binding" evidence="1">
    <location>
        <begin position="99"/>
        <end position="111"/>
    </location>
</feature>
<protein>
    <recommendedName>
        <fullName evidence="1">Bifunctional protein PyrR</fullName>
    </recommendedName>
    <domain>
        <recommendedName>
            <fullName evidence="1">Pyrimidine operon regulatory protein</fullName>
        </recommendedName>
    </domain>
    <domain>
        <recommendedName>
            <fullName evidence="1">Uracil phosphoribosyltransferase</fullName>
            <shortName evidence="1">UPRTase</shortName>
            <ecNumber evidence="1">2.4.2.9</ecNumber>
        </recommendedName>
    </domain>
</protein>
<keyword id="KW-0328">Glycosyltransferase</keyword>
<keyword id="KW-1185">Reference proteome</keyword>
<keyword id="KW-0804">Transcription</keyword>
<keyword id="KW-0805">Transcription regulation</keyword>
<keyword id="KW-0808">Transferase</keyword>
<sequence length="177" mass="19850">MPNQVVEILSAEEIRRTLTRLASQVIEKTGDLSQLVLIGIYTRGVPLAHLLANQIEMLEKIKVAVGAIDVTFYRDDLDRIKTRTPAKTKIPFDLTGKTVVLVDDVIYKGRTVRAALNAVTEYGRPSVIRLLVLVDRGHRELPIHPDYTGKKLPTASEEQVKVYLQPVDGRDQVELLK</sequence>
<proteinExistence type="inferred from homology"/>
<dbReference type="EC" id="2.4.2.9" evidence="1"/>
<dbReference type="EMBL" id="CP001291">
    <property type="protein sequence ID" value="ACK72332.1"/>
    <property type="molecule type" value="Genomic_DNA"/>
</dbReference>
<dbReference type="RefSeq" id="WP_015955917.1">
    <property type="nucleotide sequence ID" value="NC_011729.1"/>
</dbReference>
<dbReference type="SMR" id="B7KKJ9"/>
<dbReference type="STRING" id="65393.PCC7424_3958"/>
<dbReference type="KEGG" id="cyc:PCC7424_3958"/>
<dbReference type="eggNOG" id="COG2065">
    <property type="taxonomic scope" value="Bacteria"/>
</dbReference>
<dbReference type="HOGENOM" id="CLU_094234_2_1_3"/>
<dbReference type="OrthoDB" id="9802227at2"/>
<dbReference type="Proteomes" id="UP000002384">
    <property type="component" value="Chromosome"/>
</dbReference>
<dbReference type="GO" id="GO:0004845">
    <property type="term" value="F:uracil phosphoribosyltransferase activity"/>
    <property type="evidence" value="ECO:0007669"/>
    <property type="project" value="UniProtKB-UniRule"/>
</dbReference>
<dbReference type="GO" id="GO:0006355">
    <property type="term" value="P:regulation of DNA-templated transcription"/>
    <property type="evidence" value="ECO:0007669"/>
    <property type="project" value="UniProtKB-UniRule"/>
</dbReference>
<dbReference type="CDD" id="cd06223">
    <property type="entry name" value="PRTases_typeI"/>
    <property type="match status" value="1"/>
</dbReference>
<dbReference type="FunFam" id="3.40.50.2020:FF:000020">
    <property type="entry name" value="Bifunctional protein PyrR"/>
    <property type="match status" value="1"/>
</dbReference>
<dbReference type="Gene3D" id="3.40.50.2020">
    <property type="match status" value="1"/>
</dbReference>
<dbReference type="HAMAP" id="MF_01219">
    <property type="entry name" value="PyrR"/>
    <property type="match status" value="1"/>
</dbReference>
<dbReference type="InterPro" id="IPR000836">
    <property type="entry name" value="PRibTrfase_dom"/>
</dbReference>
<dbReference type="InterPro" id="IPR029057">
    <property type="entry name" value="PRTase-like"/>
</dbReference>
<dbReference type="InterPro" id="IPR023050">
    <property type="entry name" value="PyrR"/>
</dbReference>
<dbReference type="InterPro" id="IPR050137">
    <property type="entry name" value="PyrR_bifunctional"/>
</dbReference>
<dbReference type="NCBIfam" id="NF003549">
    <property type="entry name" value="PRK05205.1-5"/>
    <property type="match status" value="1"/>
</dbReference>
<dbReference type="PANTHER" id="PTHR11608">
    <property type="entry name" value="BIFUNCTIONAL PROTEIN PYRR"/>
    <property type="match status" value="1"/>
</dbReference>
<dbReference type="PANTHER" id="PTHR11608:SF0">
    <property type="entry name" value="BIFUNCTIONAL PROTEIN PYRR"/>
    <property type="match status" value="1"/>
</dbReference>
<dbReference type="Pfam" id="PF00156">
    <property type="entry name" value="Pribosyltran"/>
    <property type="match status" value="1"/>
</dbReference>
<dbReference type="SUPFAM" id="SSF53271">
    <property type="entry name" value="PRTase-like"/>
    <property type="match status" value="1"/>
</dbReference>
<comment type="function">
    <text evidence="1">Regulates the transcription of the pyrimidine nucleotide (pyr) operon in response to exogenous pyrimidines.</text>
</comment>
<comment type="function">
    <text evidence="1">Also displays a weak uracil phosphoribosyltransferase activity which is not physiologically significant.</text>
</comment>
<comment type="catalytic activity">
    <reaction evidence="1">
        <text>UMP + diphosphate = 5-phospho-alpha-D-ribose 1-diphosphate + uracil</text>
        <dbReference type="Rhea" id="RHEA:13017"/>
        <dbReference type="ChEBI" id="CHEBI:17568"/>
        <dbReference type="ChEBI" id="CHEBI:33019"/>
        <dbReference type="ChEBI" id="CHEBI:57865"/>
        <dbReference type="ChEBI" id="CHEBI:58017"/>
        <dbReference type="EC" id="2.4.2.9"/>
    </reaction>
</comment>
<comment type="similarity">
    <text evidence="1">Belongs to the purine/pyrimidine phosphoribosyltransferase family. PyrR subfamily.</text>
</comment>
<organism>
    <name type="scientific">Gloeothece citriformis (strain PCC 7424)</name>
    <name type="common">Cyanothece sp. (strain PCC 7424)</name>
    <dbReference type="NCBI Taxonomy" id="65393"/>
    <lineage>
        <taxon>Bacteria</taxon>
        <taxon>Bacillati</taxon>
        <taxon>Cyanobacteriota</taxon>
        <taxon>Cyanophyceae</taxon>
        <taxon>Oscillatoriophycideae</taxon>
        <taxon>Chroococcales</taxon>
        <taxon>Aphanothecaceae</taxon>
        <taxon>Gloeothece</taxon>
        <taxon>Gloeothece citriformis</taxon>
    </lineage>
</organism>